<proteinExistence type="inferred from homology"/>
<protein>
    <recommendedName>
        <fullName>PGL/p-HBAD biosynthesis glycosyltransferase MRA_2984</fullName>
        <ecNumber>2.4.1.-</ecNumber>
    </recommendedName>
</protein>
<reference key="1">
    <citation type="journal article" date="2008" name="PLoS ONE">
        <title>Genetic basis of virulence attenuation revealed by comparative genomic analysis of Mycobacterium tuberculosis strain H37Ra versus H37Rv.</title>
        <authorList>
            <person name="Zheng H."/>
            <person name="Lu L."/>
            <person name="Wang B."/>
            <person name="Pu S."/>
            <person name="Zhang X."/>
            <person name="Zhu G."/>
            <person name="Shi W."/>
            <person name="Zhang L."/>
            <person name="Wang H."/>
            <person name="Wang S."/>
            <person name="Zhao G."/>
            <person name="Zhang Y."/>
        </authorList>
    </citation>
    <scope>NUCLEOTIDE SEQUENCE [LARGE SCALE GENOMIC DNA]</scope>
    <source>
        <strain>ATCC 25177 / H37Ra</strain>
    </source>
</reference>
<sequence length="256" mass="29013">MAAPMFSIIIPTLNVAAVLPACLDSIARQTCGDFELVLVDGGSTDETLDIANIFAPNLGERLIIHRDTDQGVYDAMNRGVDLATGTWLLFLGADDSLYEADTLARVAAFIGEHEPSDLVYGDVIMRSTNFRWGGAFDLDRLLFKRNICHQAIFYRRGLFGTIGPYNLRYRVLADWDFNIRCFSNPALVTRYMHVVVASYNEFGGLSNTIVDKEFLKRLPMSTRLGIRLVIVLVRRWPKVISRAMVMRTVISWRRRR</sequence>
<accession>A5U6W5</accession>
<comment type="function">
    <text evidence="1">Involved in glycosylation steps downstream of mono-O-methyl-glycosyl-p-hydroxybenzoic acid derivative (p-HBAD I) and 2-O-methyl-rhamnosyl-phenolphthiocerol dimycocerosate (mycoside B) during the p-hydroxybenzoic acid derivatives (p-HBAD) and glycosylated phenolphthiocerol dimycocerosates (PGL) biosynthesis.</text>
</comment>
<comment type="similarity">
    <text evidence="2">Belongs to the glycosyltransferase 2 family.</text>
</comment>
<comment type="sequence caution" evidence="2">
    <conflict type="erroneous initiation">
        <sequence resource="EMBL-CDS" id="ABQ74765"/>
    </conflict>
</comment>
<dbReference type="EC" id="2.4.1.-"/>
<dbReference type="EMBL" id="CP000611">
    <property type="protein sequence ID" value="ABQ74765.1"/>
    <property type="status" value="ALT_INIT"/>
    <property type="molecule type" value="Genomic_DNA"/>
</dbReference>
<dbReference type="SMR" id="A5U6W5"/>
<dbReference type="CAZy" id="GT2">
    <property type="family name" value="Glycosyltransferase Family 2"/>
</dbReference>
<dbReference type="KEGG" id="mra:MRA_2984"/>
<dbReference type="eggNOG" id="COG0463">
    <property type="taxonomic scope" value="Bacteria"/>
</dbReference>
<dbReference type="HOGENOM" id="CLU_025996_21_1_11"/>
<dbReference type="Proteomes" id="UP000001988">
    <property type="component" value="Chromosome"/>
</dbReference>
<dbReference type="GO" id="GO:0016758">
    <property type="term" value="F:hexosyltransferase activity"/>
    <property type="evidence" value="ECO:0007669"/>
    <property type="project" value="UniProtKB-ARBA"/>
</dbReference>
<dbReference type="GO" id="GO:0009058">
    <property type="term" value="P:biosynthetic process"/>
    <property type="evidence" value="ECO:0007669"/>
    <property type="project" value="UniProtKB-ARBA"/>
</dbReference>
<dbReference type="CDD" id="cd06433">
    <property type="entry name" value="GT_2_WfgS_like"/>
    <property type="match status" value="1"/>
</dbReference>
<dbReference type="Gene3D" id="3.90.550.10">
    <property type="entry name" value="Spore Coat Polysaccharide Biosynthesis Protein SpsA, Chain A"/>
    <property type="match status" value="1"/>
</dbReference>
<dbReference type="InterPro" id="IPR001173">
    <property type="entry name" value="Glyco_trans_2-like"/>
</dbReference>
<dbReference type="InterPro" id="IPR029044">
    <property type="entry name" value="Nucleotide-diphossugar_trans"/>
</dbReference>
<dbReference type="PANTHER" id="PTHR22916">
    <property type="entry name" value="GLYCOSYLTRANSFERASE"/>
    <property type="match status" value="1"/>
</dbReference>
<dbReference type="PANTHER" id="PTHR22916:SF3">
    <property type="entry name" value="UDP-GLCNAC:BETAGAL BETA-1,3-N-ACETYLGLUCOSAMINYLTRANSFERASE-LIKE PROTEIN 1"/>
    <property type="match status" value="1"/>
</dbReference>
<dbReference type="Pfam" id="PF00535">
    <property type="entry name" value="Glycos_transf_2"/>
    <property type="match status" value="1"/>
</dbReference>
<dbReference type="SUPFAM" id="SSF53448">
    <property type="entry name" value="Nucleotide-diphospho-sugar transferases"/>
    <property type="match status" value="1"/>
</dbReference>
<evidence type="ECO:0000250" key="1"/>
<evidence type="ECO:0000305" key="2"/>
<keyword id="KW-0328">Glycosyltransferase</keyword>
<keyword id="KW-1185">Reference proteome</keyword>
<keyword id="KW-0808">Transferase</keyword>
<gene>
    <name type="ordered locus">MRA_2984</name>
</gene>
<name>GLTR1_MYCTA</name>
<feature type="chain" id="PRO_0000314433" description="PGL/p-HBAD biosynthesis glycosyltransferase MRA_2984">
    <location>
        <begin position="1"/>
        <end position="256"/>
    </location>
</feature>
<organism>
    <name type="scientific">Mycobacterium tuberculosis (strain ATCC 25177 / H37Ra)</name>
    <dbReference type="NCBI Taxonomy" id="419947"/>
    <lineage>
        <taxon>Bacteria</taxon>
        <taxon>Bacillati</taxon>
        <taxon>Actinomycetota</taxon>
        <taxon>Actinomycetes</taxon>
        <taxon>Mycobacteriales</taxon>
        <taxon>Mycobacteriaceae</taxon>
        <taxon>Mycobacterium</taxon>
        <taxon>Mycobacterium tuberculosis complex</taxon>
    </lineage>
</organism>